<dbReference type="EMBL" id="AE007317">
    <property type="protein sequence ID" value="AAL00690.1"/>
    <property type="status" value="ALT_INIT"/>
    <property type="molecule type" value="Genomic_DNA"/>
</dbReference>
<dbReference type="PIR" id="E98107">
    <property type="entry name" value="E98107"/>
</dbReference>
<dbReference type="RefSeq" id="NP_359479.1">
    <property type="nucleotide sequence ID" value="NC_003098.1"/>
</dbReference>
<dbReference type="SMR" id="P0A3R4"/>
<dbReference type="STRING" id="171101.spr1888"/>
<dbReference type="KEGG" id="spr:spr1888"/>
<dbReference type="PATRIC" id="fig|171101.6.peg.2037"/>
<dbReference type="eggNOG" id="COG0249">
    <property type="taxonomic scope" value="Bacteria"/>
</dbReference>
<dbReference type="HOGENOM" id="CLU_002472_3_1_9"/>
<dbReference type="Proteomes" id="UP000000586">
    <property type="component" value="Chromosome"/>
</dbReference>
<dbReference type="GO" id="GO:0005829">
    <property type="term" value="C:cytosol"/>
    <property type="evidence" value="ECO:0000318"/>
    <property type="project" value="GO_Central"/>
</dbReference>
<dbReference type="GO" id="GO:0005524">
    <property type="term" value="F:ATP binding"/>
    <property type="evidence" value="ECO:0007669"/>
    <property type="project" value="UniProtKB-UniRule"/>
</dbReference>
<dbReference type="GO" id="GO:0140664">
    <property type="term" value="F:ATP-dependent DNA damage sensor activity"/>
    <property type="evidence" value="ECO:0007669"/>
    <property type="project" value="InterPro"/>
</dbReference>
<dbReference type="GO" id="GO:0003684">
    <property type="term" value="F:damaged DNA binding"/>
    <property type="evidence" value="ECO:0007669"/>
    <property type="project" value="UniProtKB-UniRule"/>
</dbReference>
<dbReference type="GO" id="GO:0030983">
    <property type="term" value="F:mismatched DNA binding"/>
    <property type="evidence" value="ECO:0000318"/>
    <property type="project" value="GO_Central"/>
</dbReference>
<dbReference type="GO" id="GO:0006298">
    <property type="term" value="P:mismatch repair"/>
    <property type="evidence" value="ECO:0000318"/>
    <property type="project" value="GO_Central"/>
</dbReference>
<dbReference type="CDD" id="cd03284">
    <property type="entry name" value="ABC_MutS1"/>
    <property type="match status" value="1"/>
</dbReference>
<dbReference type="FunFam" id="1.10.1420.10:FF:000018">
    <property type="entry name" value="DNA mismatch repair protein MutS"/>
    <property type="match status" value="1"/>
</dbReference>
<dbReference type="FunFam" id="3.30.420.110:FF:000015">
    <property type="entry name" value="DNA mismatch repair protein MutS"/>
    <property type="match status" value="1"/>
</dbReference>
<dbReference type="FunFam" id="3.40.1170.10:FF:000001">
    <property type="entry name" value="DNA mismatch repair protein MutS"/>
    <property type="match status" value="1"/>
</dbReference>
<dbReference type="FunFam" id="3.40.50.300:FF:000896">
    <property type="entry name" value="DNA mismatch repair protein MutS"/>
    <property type="match status" value="1"/>
</dbReference>
<dbReference type="Gene3D" id="1.10.1420.10">
    <property type="match status" value="2"/>
</dbReference>
<dbReference type="Gene3D" id="3.40.1170.10">
    <property type="entry name" value="DNA repair protein MutS, domain I"/>
    <property type="match status" value="1"/>
</dbReference>
<dbReference type="Gene3D" id="3.30.420.110">
    <property type="entry name" value="MutS, connector domain"/>
    <property type="match status" value="1"/>
</dbReference>
<dbReference type="Gene3D" id="3.40.50.300">
    <property type="entry name" value="P-loop containing nucleotide triphosphate hydrolases"/>
    <property type="match status" value="1"/>
</dbReference>
<dbReference type="HAMAP" id="MF_00096">
    <property type="entry name" value="MutS"/>
    <property type="match status" value="1"/>
</dbReference>
<dbReference type="InterPro" id="IPR005748">
    <property type="entry name" value="DNA_mismatch_repair_MutS"/>
</dbReference>
<dbReference type="InterPro" id="IPR007695">
    <property type="entry name" value="DNA_mismatch_repair_MutS-lik_N"/>
</dbReference>
<dbReference type="InterPro" id="IPR017261">
    <property type="entry name" value="DNA_mismatch_repair_MutS/MSH"/>
</dbReference>
<dbReference type="InterPro" id="IPR000432">
    <property type="entry name" value="DNA_mismatch_repair_MutS_C"/>
</dbReference>
<dbReference type="InterPro" id="IPR007861">
    <property type="entry name" value="DNA_mismatch_repair_MutS_clamp"/>
</dbReference>
<dbReference type="InterPro" id="IPR007696">
    <property type="entry name" value="DNA_mismatch_repair_MutS_core"/>
</dbReference>
<dbReference type="InterPro" id="IPR016151">
    <property type="entry name" value="DNA_mismatch_repair_MutS_N"/>
</dbReference>
<dbReference type="InterPro" id="IPR036187">
    <property type="entry name" value="DNA_mismatch_repair_MutS_sf"/>
</dbReference>
<dbReference type="InterPro" id="IPR007860">
    <property type="entry name" value="DNA_mmatch_repair_MutS_con_dom"/>
</dbReference>
<dbReference type="InterPro" id="IPR045076">
    <property type="entry name" value="MutS"/>
</dbReference>
<dbReference type="InterPro" id="IPR036678">
    <property type="entry name" value="MutS_con_dom_sf"/>
</dbReference>
<dbReference type="InterPro" id="IPR027417">
    <property type="entry name" value="P-loop_NTPase"/>
</dbReference>
<dbReference type="NCBIfam" id="TIGR01070">
    <property type="entry name" value="mutS1"/>
    <property type="match status" value="1"/>
</dbReference>
<dbReference type="NCBIfam" id="NF003810">
    <property type="entry name" value="PRK05399.1"/>
    <property type="match status" value="1"/>
</dbReference>
<dbReference type="PANTHER" id="PTHR11361:SF34">
    <property type="entry name" value="DNA MISMATCH REPAIR PROTEIN MSH1, MITOCHONDRIAL"/>
    <property type="match status" value="1"/>
</dbReference>
<dbReference type="PANTHER" id="PTHR11361">
    <property type="entry name" value="DNA MISMATCH REPAIR PROTEIN MUTS FAMILY MEMBER"/>
    <property type="match status" value="1"/>
</dbReference>
<dbReference type="Pfam" id="PF01624">
    <property type="entry name" value="MutS_I"/>
    <property type="match status" value="1"/>
</dbReference>
<dbReference type="Pfam" id="PF05188">
    <property type="entry name" value="MutS_II"/>
    <property type="match status" value="1"/>
</dbReference>
<dbReference type="Pfam" id="PF05192">
    <property type="entry name" value="MutS_III"/>
    <property type="match status" value="1"/>
</dbReference>
<dbReference type="Pfam" id="PF05190">
    <property type="entry name" value="MutS_IV"/>
    <property type="match status" value="1"/>
</dbReference>
<dbReference type="Pfam" id="PF00488">
    <property type="entry name" value="MutS_V"/>
    <property type="match status" value="1"/>
</dbReference>
<dbReference type="PIRSF" id="PIRSF037677">
    <property type="entry name" value="DNA_mis_repair_Msh6"/>
    <property type="match status" value="1"/>
</dbReference>
<dbReference type="SMART" id="SM00534">
    <property type="entry name" value="MUTSac"/>
    <property type="match status" value="1"/>
</dbReference>
<dbReference type="SMART" id="SM00533">
    <property type="entry name" value="MUTSd"/>
    <property type="match status" value="1"/>
</dbReference>
<dbReference type="SUPFAM" id="SSF55271">
    <property type="entry name" value="DNA repair protein MutS, domain I"/>
    <property type="match status" value="1"/>
</dbReference>
<dbReference type="SUPFAM" id="SSF53150">
    <property type="entry name" value="DNA repair protein MutS, domain II"/>
    <property type="match status" value="1"/>
</dbReference>
<dbReference type="SUPFAM" id="SSF48334">
    <property type="entry name" value="DNA repair protein MutS, domain III"/>
    <property type="match status" value="1"/>
</dbReference>
<dbReference type="SUPFAM" id="SSF52540">
    <property type="entry name" value="P-loop containing nucleoside triphosphate hydrolases"/>
    <property type="match status" value="1"/>
</dbReference>
<dbReference type="PROSITE" id="PS00486">
    <property type="entry name" value="DNA_MISMATCH_REPAIR_2"/>
    <property type="match status" value="1"/>
</dbReference>
<keyword id="KW-0067">ATP-binding</keyword>
<keyword id="KW-0227">DNA damage</keyword>
<keyword id="KW-0234">DNA repair</keyword>
<keyword id="KW-0238">DNA-binding</keyword>
<keyword id="KW-0547">Nucleotide-binding</keyword>
<keyword id="KW-1185">Reference proteome</keyword>
<reference key="1">
    <citation type="journal article" date="2001" name="J. Bacteriol.">
        <title>Genome of the bacterium Streptococcus pneumoniae strain R6.</title>
        <authorList>
            <person name="Hoskins J."/>
            <person name="Alborn W.E. Jr."/>
            <person name="Arnold J."/>
            <person name="Blaszczak L.C."/>
            <person name="Burgett S."/>
            <person name="DeHoff B.S."/>
            <person name="Estrem S.T."/>
            <person name="Fritz L."/>
            <person name="Fu D.-J."/>
            <person name="Fuller W."/>
            <person name="Geringer C."/>
            <person name="Gilmour R."/>
            <person name="Glass J.S."/>
            <person name="Khoja H."/>
            <person name="Kraft A.R."/>
            <person name="Lagace R.E."/>
            <person name="LeBlanc D.J."/>
            <person name="Lee L.N."/>
            <person name="Lefkowitz E.J."/>
            <person name="Lu J."/>
            <person name="Matsushima P."/>
            <person name="McAhren S.M."/>
            <person name="McHenney M."/>
            <person name="McLeaster K."/>
            <person name="Mundy C.W."/>
            <person name="Nicas T.I."/>
            <person name="Norris F.H."/>
            <person name="O'Gara M."/>
            <person name="Peery R.B."/>
            <person name="Robertson G.T."/>
            <person name="Rockey P."/>
            <person name="Sun P.-M."/>
            <person name="Winkler M.E."/>
            <person name="Yang Y."/>
            <person name="Young-Bellido M."/>
            <person name="Zhao G."/>
            <person name="Zook C.A."/>
            <person name="Baltz R.H."/>
            <person name="Jaskunas S.R."/>
            <person name="Rosteck P.R. Jr."/>
            <person name="Skatrud P.L."/>
            <person name="Glass J.I."/>
        </authorList>
    </citation>
    <scope>NUCLEOTIDE SEQUENCE [LARGE SCALE GENOMIC DNA]</scope>
    <source>
        <strain>ATCC BAA-255 / R6</strain>
    </source>
</reference>
<comment type="function">
    <text>This protein is involved in the repair of mismatches in DNA. It is possible that it carries out the mismatch recognition step.</text>
</comment>
<comment type="similarity">
    <text evidence="2">Belongs to the DNA mismatch repair MutS family.</text>
</comment>
<comment type="sequence caution" evidence="2">
    <conflict type="erroneous initiation">
        <sequence resource="EMBL-CDS" id="AAL00690"/>
    </conflict>
</comment>
<organism>
    <name type="scientific">Streptococcus pneumoniae (strain ATCC BAA-255 / R6)</name>
    <dbReference type="NCBI Taxonomy" id="171101"/>
    <lineage>
        <taxon>Bacteria</taxon>
        <taxon>Bacillati</taxon>
        <taxon>Bacillota</taxon>
        <taxon>Bacilli</taxon>
        <taxon>Lactobacillales</taxon>
        <taxon>Streptococcaceae</taxon>
        <taxon>Streptococcus</taxon>
    </lineage>
</organism>
<gene>
    <name type="primary">hexA</name>
    <name type="ordered locus">spr1888</name>
</gene>
<sequence>MAIEKLSPGMQQYVDIKKQYPDAFLLFRMGDFYELFYEDAVNAAQILEISLTSRNKNADNPIPMAGVPYHSAQQYIDVLIEQGYKVAIAEQMEDPKQAVGVVKREVVQVITPGTVVDSSKPDSQNNFLVSIDREGNQFGLAYMDLVTGDFYVTGLLDFTLVCGEIRNLKAREVVLGYDLSEEEEQILSRQMNLVLSYEKESFEDLHLLDLRLATVEQTASSKLLQYVHRTQMRELNHLKPVIRYEIKDFLQMDYATKASLDLVENARSGKKQGSLFWLLDETKTAMGMRLLRSWIHRPLIDKERIVQRQEVVQVFLDHFFERSDLTDSLKGVYDIERLASRVSFGKTNPKDLLQLATTLSSVPRIRAILEGMEQPTLAYLIAQLDAIPELESLISAAIAPEAPHVITDGGIIRTGFDETLDKYRCVLREGTSWIAEIEAKERENSGISTLKIDYNKKDGYYFHVTNSQLGNVPAHFFRKATLKNSERFGTEELARIEGDMLEAREKSANLEYEIFMRIREEVGKYIQRLQALAQGIATVDVLQSLAVVAETQHLIRPEFGDDSQIDIRKGRHAVVEKVMGAQTYIPNTIQMAEDTSIQLVTGPNMSGKSTYMRQLAMTAVMAQLGSYVPAESAHLPIFDAIFTRIGAADDLVSGQSTFMVEMMEANNAISHATKNSLILFDELGRGTATYDGMALAQSIIEYIHEHIGAKTLFATHYHELTSLESSLQHLVNVHVATLEQDGQVTFLHKIEPGPADKSYGIHVAKIAGLPADLLARADKILTQLENQGTESPPPMRQTSAVTEQISLFDRAEEHPILAELAKLDVYNMTPMQVMNVLVELKQKL</sequence>
<name>HEXA_STRR6</name>
<evidence type="ECO:0000255" key="1"/>
<evidence type="ECO:0000305" key="2"/>
<feature type="chain" id="PRO_0000115148" description="DNA mismatch repair protein HexA">
    <location>
        <begin position="1"/>
        <end position="844"/>
    </location>
</feature>
<feature type="binding site" evidence="1">
    <location>
        <begin position="602"/>
        <end position="609"/>
    </location>
    <ligand>
        <name>ATP</name>
        <dbReference type="ChEBI" id="CHEBI:30616"/>
    </ligand>
</feature>
<protein>
    <recommendedName>
        <fullName>DNA mismatch repair protein HexA</fullName>
    </recommendedName>
</protein>
<accession>P0A3R4</accession>
<accession>P10564</accession>
<proteinExistence type="inferred from homology"/>